<keyword id="KW-0010">Activator</keyword>
<keyword id="KW-0137">Centromere</keyword>
<keyword id="KW-0156">Chromatin regulator</keyword>
<keyword id="KW-0158">Chromosome</keyword>
<keyword id="KW-0175">Coiled coil</keyword>
<keyword id="KW-0995">Kinetochore</keyword>
<keyword id="KW-0539">Nucleus</keyword>
<keyword id="KW-1185">Reference proteome</keyword>
<keyword id="KW-0804">Transcription</keyword>
<keyword id="KW-0805">Transcription regulation</keyword>
<comment type="function">
    <text evidence="1">Component of the NuA4 histone acetyltransferase complex which is involved in transcriptional activation of select genes principally by acetylation of nucleosomal histone H4 and H2A. This modification may both alter nucleosome - DNA interactions and promote interaction of the modified histones with other proteins which positively regulate transcription. Component of HBO1 complexes, which specifically mediate acetylation of histone H3 at 'Lys-14' (H3K14ac), and have reduced activity toward histone H4. Component of the MOZ/MORF complex which has a histone H3 acetyltransferase activity (By similarity).</text>
</comment>
<comment type="subunit">
    <text evidence="1">Component of the NuA4 histone acetyltransferase complex. Component of the hbo1 complex. Component of the moz/morf complex (By similarity).</text>
</comment>
<comment type="subcellular location">
    <subcellularLocation>
        <location evidence="1">Nucleus</location>
        <location evidence="1">Nucleolus</location>
    </subcellularLocation>
    <subcellularLocation>
        <location evidence="1">Chromosome</location>
        <location evidence="1">Centromere</location>
        <location evidence="1">Kinetochore</location>
    </subcellularLocation>
</comment>
<comment type="similarity">
    <text evidence="4">Belongs to the EAF6 family.</text>
</comment>
<accession>Q68ER9</accession>
<proteinExistence type="evidence at transcript level"/>
<dbReference type="EMBL" id="BC080132">
    <property type="protein sequence ID" value="AAH80132.1"/>
    <property type="molecule type" value="mRNA"/>
</dbReference>
<dbReference type="RefSeq" id="NP_001007868.1">
    <property type="nucleotide sequence ID" value="NM_001007867.1"/>
</dbReference>
<dbReference type="SMR" id="Q68ER9"/>
<dbReference type="FunCoup" id="Q68ER9">
    <property type="interactions" value="1675"/>
</dbReference>
<dbReference type="STRING" id="8364.ENSXETP00000052399"/>
<dbReference type="GeneID" id="493254"/>
<dbReference type="KEGG" id="xtr:493254"/>
<dbReference type="AGR" id="Xenbase:XB-GENE-975403"/>
<dbReference type="CTD" id="64769"/>
<dbReference type="Xenbase" id="XB-GENE-975403">
    <property type="gene designation" value="meaf6"/>
</dbReference>
<dbReference type="HOGENOM" id="CLU_092163_1_0_1"/>
<dbReference type="InParanoid" id="Q68ER9"/>
<dbReference type="OrthoDB" id="440324at2759"/>
<dbReference type="Reactome" id="R-XTR-6804758">
    <property type="pathway name" value="Regulation of TP53 Activity through Acetylation"/>
</dbReference>
<dbReference type="Proteomes" id="UP000008143">
    <property type="component" value="Chromosome 2"/>
</dbReference>
<dbReference type="GO" id="GO:0000776">
    <property type="term" value="C:kinetochore"/>
    <property type="evidence" value="ECO:0000250"/>
    <property type="project" value="UniProtKB"/>
</dbReference>
<dbReference type="GO" id="GO:0070776">
    <property type="term" value="C:MOZ/MORF histone acetyltransferase complex"/>
    <property type="evidence" value="ECO:0000250"/>
    <property type="project" value="UniProtKB"/>
</dbReference>
<dbReference type="GO" id="GO:0035267">
    <property type="term" value="C:NuA4 histone acetyltransferase complex"/>
    <property type="evidence" value="ECO:0000250"/>
    <property type="project" value="UniProtKB"/>
</dbReference>
<dbReference type="GO" id="GO:0005730">
    <property type="term" value="C:nucleolus"/>
    <property type="evidence" value="ECO:0000250"/>
    <property type="project" value="UniProtKB"/>
</dbReference>
<dbReference type="GO" id="GO:0006338">
    <property type="term" value="P:chromatin remodeling"/>
    <property type="evidence" value="ECO:0007669"/>
    <property type="project" value="GOC"/>
</dbReference>
<dbReference type="InterPro" id="IPR015418">
    <property type="entry name" value="Eaf6"/>
</dbReference>
<dbReference type="PANTHER" id="PTHR13476">
    <property type="entry name" value="CHROMATIN MODIFICATION-RELATED PROTEIN MEAF6"/>
    <property type="match status" value="1"/>
</dbReference>
<dbReference type="Pfam" id="PF09340">
    <property type="entry name" value="NuA4"/>
    <property type="match status" value="1"/>
</dbReference>
<evidence type="ECO:0000250" key="1">
    <source>
        <dbReference type="UniProtKB" id="Q9HAF1"/>
    </source>
</evidence>
<evidence type="ECO:0000255" key="2"/>
<evidence type="ECO:0000256" key="3">
    <source>
        <dbReference type="SAM" id="MobiDB-lite"/>
    </source>
</evidence>
<evidence type="ECO:0000305" key="4"/>
<name>EAF6_XENTR</name>
<sequence length="191" mass="21615">MAMHNKATPPQIPDTRRELAELVKRKQELAETLANLERQIYAFEGSYLEDTQMYGNIIRGWDRYLTNQKNSNSKNDRRNRKFKEAERLFSKSSVTSAAAVSALAGVQDQLIEKREPGSGTESDNSPDFQNQENEPSQDDTEDLDGSLSGVKPQKAASSANSGGHHSSHKKRKNKNRHRIDLKLNKKPRSDY</sequence>
<gene>
    <name type="primary">meaf6</name>
</gene>
<reference key="1">
    <citation type="submission" date="2004-08" db="EMBL/GenBank/DDBJ databases">
        <authorList>
            <consortium name="NIH - Xenopus Gene Collection (XGC) project"/>
        </authorList>
    </citation>
    <scope>NUCLEOTIDE SEQUENCE [LARGE SCALE MRNA]</scope>
    <source>
        <tissue>Embryo</tissue>
    </source>
</reference>
<feature type="chain" id="PRO_0000272614" description="Chromatin modification-related protein MEAF6">
    <location>
        <begin position="1"/>
        <end position="191"/>
    </location>
</feature>
<feature type="region of interest" description="Disordered" evidence="3">
    <location>
        <begin position="104"/>
        <end position="191"/>
    </location>
</feature>
<feature type="coiled-coil region" evidence="2">
    <location>
        <begin position="11"/>
        <end position="47"/>
    </location>
</feature>
<feature type="compositionally biased region" description="Polar residues" evidence="3">
    <location>
        <begin position="119"/>
        <end position="134"/>
    </location>
</feature>
<feature type="compositionally biased region" description="Acidic residues" evidence="3">
    <location>
        <begin position="135"/>
        <end position="144"/>
    </location>
</feature>
<feature type="compositionally biased region" description="Low complexity" evidence="3">
    <location>
        <begin position="154"/>
        <end position="164"/>
    </location>
</feature>
<feature type="compositionally biased region" description="Basic residues" evidence="3">
    <location>
        <begin position="165"/>
        <end position="177"/>
    </location>
</feature>
<feature type="compositionally biased region" description="Basic and acidic residues" evidence="3">
    <location>
        <begin position="178"/>
        <end position="191"/>
    </location>
</feature>
<protein>
    <recommendedName>
        <fullName>Chromatin modification-related protein MEAF6</fullName>
        <shortName>MYST/Esa1-associated factor 6</shortName>
    </recommendedName>
    <alternativeName>
        <fullName>Esa1-associated factor 6 homolog</fullName>
        <shortName>Protein EAF6 homolog</shortName>
    </alternativeName>
</protein>
<organism>
    <name type="scientific">Xenopus tropicalis</name>
    <name type="common">Western clawed frog</name>
    <name type="synonym">Silurana tropicalis</name>
    <dbReference type="NCBI Taxonomy" id="8364"/>
    <lineage>
        <taxon>Eukaryota</taxon>
        <taxon>Metazoa</taxon>
        <taxon>Chordata</taxon>
        <taxon>Craniata</taxon>
        <taxon>Vertebrata</taxon>
        <taxon>Euteleostomi</taxon>
        <taxon>Amphibia</taxon>
        <taxon>Batrachia</taxon>
        <taxon>Anura</taxon>
        <taxon>Pipoidea</taxon>
        <taxon>Pipidae</taxon>
        <taxon>Xenopodinae</taxon>
        <taxon>Xenopus</taxon>
        <taxon>Silurana</taxon>
    </lineage>
</organism>